<protein>
    <recommendedName>
        <fullName evidence="1">Deoxyuridine 5'-triphosphate nucleotidohydrolase</fullName>
        <shortName evidence="1">dUTPase</shortName>
        <ecNumber evidence="1">3.6.1.23</ecNumber>
    </recommendedName>
    <alternativeName>
        <fullName evidence="1">dUTP pyrophosphatase</fullName>
    </alternativeName>
</protein>
<evidence type="ECO:0000255" key="1">
    <source>
        <dbReference type="HAMAP-Rule" id="MF_00116"/>
    </source>
</evidence>
<feature type="chain" id="PRO_1000094952" description="Deoxyuridine 5'-triphosphate nucleotidohydrolase">
    <location>
        <begin position="1"/>
        <end position="145"/>
    </location>
</feature>
<feature type="binding site" evidence="1">
    <location>
        <begin position="65"/>
        <end position="67"/>
    </location>
    <ligand>
        <name>substrate</name>
    </ligand>
</feature>
<feature type="binding site" evidence="1">
    <location>
        <position position="78"/>
    </location>
    <ligand>
        <name>substrate</name>
    </ligand>
</feature>
<feature type="binding site" evidence="1">
    <location>
        <begin position="82"/>
        <end position="84"/>
    </location>
    <ligand>
        <name>substrate</name>
    </ligand>
</feature>
<feature type="binding site" evidence="1">
    <location>
        <position position="92"/>
    </location>
    <ligand>
        <name>substrate</name>
    </ligand>
</feature>
<reference key="1">
    <citation type="submission" date="2008-06" db="EMBL/GenBank/DDBJ databases">
        <title>Complete sequence of Chlorobium phaeobacteroides BS1.</title>
        <authorList>
            <consortium name="US DOE Joint Genome Institute"/>
            <person name="Lucas S."/>
            <person name="Copeland A."/>
            <person name="Lapidus A."/>
            <person name="Glavina del Rio T."/>
            <person name="Dalin E."/>
            <person name="Tice H."/>
            <person name="Bruce D."/>
            <person name="Goodwin L."/>
            <person name="Pitluck S."/>
            <person name="Schmutz J."/>
            <person name="Larimer F."/>
            <person name="Land M."/>
            <person name="Hauser L."/>
            <person name="Kyrpides N."/>
            <person name="Ovchinnikova G."/>
            <person name="Li T."/>
            <person name="Liu Z."/>
            <person name="Zhao F."/>
            <person name="Overmann J."/>
            <person name="Bryant D.A."/>
            <person name="Richardson P."/>
        </authorList>
    </citation>
    <scope>NUCLEOTIDE SEQUENCE [LARGE SCALE GENOMIC DNA]</scope>
    <source>
        <strain>BS1</strain>
    </source>
</reference>
<sequence>MVKVPVVRVNEKAILPHYATFQAAGMDLAACLDEPVTLAPFSTALIPTGLAIELPPGYEAQLRPRSGLALKHMISLPNAPATIDADYRGEVMVILVNYGKTPFIVCHGDRIAQMVVARYEHVRLEEVKALSETDRGDGGFGHTGV</sequence>
<gene>
    <name evidence="1" type="primary">dut</name>
    <name type="ordered locus">Cphamn1_0943</name>
</gene>
<comment type="function">
    <text evidence="1">This enzyme is involved in nucleotide metabolism: it produces dUMP, the immediate precursor of thymidine nucleotides and it decreases the intracellular concentration of dUTP so that uracil cannot be incorporated into DNA.</text>
</comment>
<comment type="catalytic activity">
    <reaction evidence="1">
        <text>dUTP + H2O = dUMP + diphosphate + H(+)</text>
        <dbReference type="Rhea" id="RHEA:10248"/>
        <dbReference type="ChEBI" id="CHEBI:15377"/>
        <dbReference type="ChEBI" id="CHEBI:15378"/>
        <dbReference type="ChEBI" id="CHEBI:33019"/>
        <dbReference type="ChEBI" id="CHEBI:61555"/>
        <dbReference type="ChEBI" id="CHEBI:246422"/>
        <dbReference type="EC" id="3.6.1.23"/>
    </reaction>
</comment>
<comment type="cofactor">
    <cofactor evidence="1">
        <name>Mg(2+)</name>
        <dbReference type="ChEBI" id="CHEBI:18420"/>
    </cofactor>
</comment>
<comment type="pathway">
    <text evidence="1">Pyrimidine metabolism; dUMP biosynthesis; dUMP from dCTP (dUTP route): step 2/2.</text>
</comment>
<comment type="similarity">
    <text evidence="1">Belongs to the dUTPase family.</text>
</comment>
<dbReference type="EC" id="3.6.1.23" evidence="1"/>
<dbReference type="EMBL" id="CP001101">
    <property type="protein sequence ID" value="ACE03888.1"/>
    <property type="molecule type" value="Genomic_DNA"/>
</dbReference>
<dbReference type="SMR" id="B3EPL0"/>
<dbReference type="STRING" id="331678.Cphamn1_0943"/>
<dbReference type="KEGG" id="cpb:Cphamn1_0943"/>
<dbReference type="eggNOG" id="COG0756">
    <property type="taxonomic scope" value="Bacteria"/>
</dbReference>
<dbReference type="HOGENOM" id="CLU_068508_1_2_10"/>
<dbReference type="OrthoDB" id="9809956at2"/>
<dbReference type="UniPathway" id="UPA00610">
    <property type="reaction ID" value="UER00666"/>
</dbReference>
<dbReference type="GO" id="GO:0004170">
    <property type="term" value="F:dUTP diphosphatase activity"/>
    <property type="evidence" value="ECO:0007669"/>
    <property type="project" value="UniProtKB-UniRule"/>
</dbReference>
<dbReference type="GO" id="GO:0000287">
    <property type="term" value="F:magnesium ion binding"/>
    <property type="evidence" value="ECO:0007669"/>
    <property type="project" value="UniProtKB-UniRule"/>
</dbReference>
<dbReference type="GO" id="GO:0006226">
    <property type="term" value="P:dUMP biosynthetic process"/>
    <property type="evidence" value="ECO:0007669"/>
    <property type="project" value="UniProtKB-UniRule"/>
</dbReference>
<dbReference type="GO" id="GO:0046081">
    <property type="term" value="P:dUTP catabolic process"/>
    <property type="evidence" value="ECO:0007669"/>
    <property type="project" value="InterPro"/>
</dbReference>
<dbReference type="CDD" id="cd07557">
    <property type="entry name" value="trimeric_dUTPase"/>
    <property type="match status" value="1"/>
</dbReference>
<dbReference type="FunFam" id="2.70.40.10:FF:000002">
    <property type="entry name" value="dUTP diphosphatase"/>
    <property type="match status" value="1"/>
</dbReference>
<dbReference type="Gene3D" id="2.70.40.10">
    <property type="match status" value="1"/>
</dbReference>
<dbReference type="HAMAP" id="MF_00116">
    <property type="entry name" value="dUTPase_bact"/>
    <property type="match status" value="1"/>
</dbReference>
<dbReference type="InterPro" id="IPR008181">
    <property type="entry name" value="dUTPase"/>
</dbReference>
<dbReference type="InterPro" id="IPR029054">
    <property type="entry name" value="dUTPase-like"/>
</dbReference>
<dbReference type="InterPro" id="IPR036157">
    <property type="entry name" value="dUTPase-like_sf"/>
</dbReference>
<dbReference type="InterPro" id="IPR033704">
    <property type="entry name" value="dUTPase_trimeric"/>
</dbReference>
<dbReference type="NCBIfam" id="TIGR00576">
    <property type="entry name" value="dut"/>
    <property type="match status" value="1"/>
</dbReference>
<dbReference type="NCBIfam" id="NF001862">
    <property type="entry name" value="PRK00601.1"/>
    <property type="match status" value="1"/>
</dbReference>
<dbReference type="PANTHER" id="PTHR11241">
    <property type="entry name" value="DEOXYURIDINE 5'-TRIPHOSPHATE NUCLEOTIDOHYDROLASE"/>
    <property type="match status" value="1"/>
</dbReference>
<dbReference type="PANTHER" id="PTHR11241:SF0">
    <property type="entry name" value="DEOXYURIDINE 5'-TRIPHOSPHATE NUCLEOTIDOHYDROLASE"/>
    <property type="match status" value="1"/>
</dbReference>
<dbReference type="Pfam" id="PF00692">
    <property type="entry name" value="dUTPase"/>
    <property type="match status" value="1"/>
</dbReference>
<dbReference type="SUPFAM" id="SSF51283">
    <property type="entry name" value="dUTPase-like"/>
    <property type="match status" value="1"/>
</dbReference>
<accession>B3EPL0</accession>
<name>DUT_CHLPB</name>
<proteinExistence type="inferred from homology"/>
<organism>
    <name type="scientific">Chlorobium phaeobacteroides (strain BS1)</name>
    <dbReference type="NCBI Taxonomy" id="331678"/>
    <lineage>
        <taxon>Bacteria</taxon>
        <taxon>Pseudomonadati</taxon>
        <taxon>Chlorobiota</taxon>
        <taxon>Chlorobiia</taxon>
        <taxon>Chlorobiales</taxon>
        <taxon>Chlorobiaceae</taxon>
        <taxon>Chlorobium/Pelodictyon group</taxon>
        <taxon>Chlorobium</taxon>
    </lineage>
</organism>
<keyword id="KW-0378">Hydrolase</keyword>
<keyword id="KW-0460">Magnesium</keyword>
<keyword id="KW-0479">Metal-binding</keyword>
<keyword id="KW-0546">Nucleotide metabolism</keyword>